<proteinExistence type="inferred from homology"/>
<reference key="1">
    <citation type="journal article" date="2011" name="J. Bacteriol.">
        <title>Genome sequence of Thermotoga sp. strain RQ2, a hyperthermophilic bacterium isolated from a geothermally heated region of the seafloor near Ribeira Quente, the Azores.</title>
        <authorList>
            <person name="Swithers K.S."/>
            <person name="DiPippo J.L."/>
            <person name="Bruce D.C."/>
            <person name="Detter C."/>
            <person name="Tapia R."/>
            <person name="Han S."/>
            <person name="Saunders E."/>
            <person name="Goodwin L.A."/>
            <person name="Han J."/>
            <person name="Woyke T."/>
            <person name="Pitluck S."/>
            <person name="Pennacchio L."/>
            <person name="Nolan M."/>
            <person name="Mikhailova N."/>
            <person name="Lykidis A."/>
            <person name="Land M.L."/>
            <person name="Brettin T."/>
            <person name="Stetter K.O."/>
            <person name="Nelson K.E."/>
            <person name="Gogarten J.P."/>
            <person name="Noll K.M."/>
        </authorList>
    </citation>
    <scope>NUCLEOTIDE SEQUENCE [LARGE SCALE GENOMIC DNA]</scope>
    <source>
        <strain>RQ2</strain>
    </source>
</reference>
<organism>
    <name type="scientific">Thermotoga sp. (strain RQ2)</name>
    <dbReference type="NCBI Taxonomy" id="126740"/>
    <lineage>
        <taxon>Bacteria</taxon>
        <taxon>Thermotogati</taxon>
        <taxon>Thermotogota</taxon>
        <taxon>Thermotogae</taxon>
        <taxon>Thermotogales</taxon>
        <taxon>Thermotogaceae</taxon>
        <taxon>Thermotoga</taxon>
    </lineage>
</organism>
<protein>
    <recommendedName>
        <fullName evidence="1">Large ribosomal subunit protein uL10</fullName>
    </recommendedName>
    <alternativeName>
        <fullName evidence="2">50S ribosomal protein L10</fullName>
    </alternativeName>
</protein>
<sequence>MLTRQQKELIVEEMSEIFKKTSLILFADFLGFTVADLTELRSKLREKYGDGARFRVVKNTLLNLALKNAEYEGYEEFLKGPTAVLYVTEGDPVEAVKIVYNFYKDKKADLSRLKGGFLEGKKFTAEEVENIAKLPSKEELYAMLVGRVKAPITGLVFVLSGILRNLVYVLNAIKEKKSE</sequence>
<comment type="function">
    <text evidence="1">Forms part of the ribosomal stalk, playing a central role in the interaction of the ribosome with GTP-bound translation factors.</text>
</comment>
<comment type="subunit">
    <text evidence="1">Part of the ribosomal stalk of the 50S ribosomal subunit. The N-terminus interacts with L11 and the large rRNA to form the base of the stalk. The C-terminus forms an elongated spine to which L12 dimers bind in a sequential fashion forming a multimeric L10(L12)X complex.</text>
</comment>
<comment type="similarity">
    <text evidence="1">Belongs to the universal ribosomal protein uL10 family.</text>
</comment>
<keyword id="KW-0687">Ribonucleoprotein</keyword>
<keyword id="KW-0689">Ribosomal protein</keyword>
<keyword id="KW-0694">RNA-binding</keyword>
<keyword id="KW-0699">rRNA-binding</keyword>
<accession>B1L937</accession>
<feature type="chain" id="PRO_1000121028" description="Large ribosomal subunit protein uL10">
    <location>
        <begin position="1"/>
        <end position="179"/>
    </location>
</feature>
<gene>
    <name evidence="1" type="primary">rplJ</name>
    <name type="ordered locus">TRQ2_0479</name>
</gene>
<name>RL10_THESQ</name>
<dbReference type="EMBL" id="CP000969">
    <property type="protein sequence ID" value="ACB08835.1"/>
    <property type="molecule type" value="Genomic_DNA"/>
</dbReference>
<dbReference type="RefSeq" id="WP_011943106.1">
    <property type="nucleotide sequence ID" value="NC_010483.1"/>
</dbReference>
<dbReference type="SMR" id="B1L937"/>
<dbReference type="KEGG" id="trq:TRQ2_0479"/>
<dbReference type="HOGENOM" id="CLU_092227_1_2_0"/>
<dbReference type="Proteomes" id="UP000001687">
    <property type="component" value="Chromosome"/>
</dbReference>
<dbReference type="GO" id="GO:0015934">
    <property type="term" value="C:large ribosomal subunit"/>
    <property type="evidence" value="ECO:0007669"/>
    <property type="project" value="InterPro"/>
</dbReference>
<dbReference type="GO" id="GO:0070180">
    <property type="term" value="F:large ribosomal subunit rRNA binding"/>
    <property type="evidence" value="ECO:0007669"/>
    <property type="project" value="UniProtKB-UniRule"/>
</dbReference>
<dbReference type="GO" id="GO:0003735">
    <property type="term" value="F:structural constituent of ribosome"/>
    <property type="evidence" value="ECO:0007669"/>
    <property type="project" value="InterPro"/>
</dbReference>
<dbReference type="GO" id="GO:0006412">
    <property type="term" value="P:translation"/>
    <property type="evidence" value="ECO:0007669"/>
    <property type="project" value="UniProtKB-UniRule"/>
</dbReference>
<dbReference type="CDD" id="cd05797">
    <property type="entry name" value="Ribosomal_L10"/>
    <property type="match status" value="1"/>
</dbReference>
<dbReference type="Gene3D" id="3.30.70.1730">
    <property type="match status" value="1"/>
</dbReference>
<dbReference type="Gene3D" id="6.10.250.290">
    <property type="match status" value="1"/>
</dbReference>
<dbReference type="HAMAP" id="MF_00362">
    <property type="entry name" value="Ribosomal_uL10"/>
    <property type="match status" value="1"/>
</dbReference>
<dbReference type="InterPro" id="IPR001790">
    <property type="entry name" value="Ribosomal_uL10"/>
</dbReference>
<dbReference type="InterPro" id="IPR043141">
    <property type="entry name" value="Ribosomal_uL10-like_sf"/>
</dbReference>
<dbReference type="InterPro" id="IPR022973">
    <property type="entry name" value="Ribosomal_uL10_bac"/>
</dbReference>
<dbReference type="InterPro" id="IPR047865">
    <property type="entry name" value="Ribosomal_uL10_bac_type"/>
</dbReference>
<dbReference type="InterPro" id="IPR002363">
    <property type="entry name" value="Ribosomal_uL10_CS_bac"/>
</dbReference>
<dbReference type="NCBIfam" id="NF000955">
    <property type="entry name" value="PRK00099.1-1"/>
    <property type="match status" value="1"/>
</dbReference>
<dbReference type="PANTHER" id="PTHR11560">
    <property type="entry name" value="39S RIBOSOMAL PROTEIN L10, MITOCHONDRIAL"/>
    <property type="match status" value="1"/>
</dbReference>
<dbReference type="Pfam" id="PF00466">
    <property type="entry name" value="Ribosomal_L10"/>
    <property type="match status" value="1"/>
</dbReference>
<dbReference type="SUPFAM" id="SSF160369">
    <property type="entry name" value="Ribosomal protein L10-like"/>
    <property type="match status" value="1"/>
</dbReference>
<dbReference type="PROSITE" id="PS01109">
    <property type="entry name" value="RIBOSOMAL_L10"/>
    <property type="match status" value="1"/>
</dbReference>
<evidence type="ECO:0000255" key="1">
    <source>
        <dbReference type="HAMAP-Rule" id="MF_00362"/>
    </source>
</evidence>
<evidence type="ECO:0000305" key="2"/>